<organism>
    <name type="scientific">Escherichia coli O45:K1 (strain S88 / ExPEC)</name>
    <dbReference type="NCBI Taxonomy" id="585035"/>
    <lineage>
        <taxon>Bacteria</taxon>
        <taxon>Pseudomonadati</taxon>
        <taxon>Pseudomonadota</taxon>
        <taxon>Gammaproteobacteria</taxon>
        <taxon>Enterobacterales</taxon>
        <taxon>Enterobacteriaceae</taxon>
        <taxon>Escherichia</taxon>
    </lineage>
</organism>
<evidence type="ECO:0000255" key="1">
    <source>
        <dbReference type="HAMAP-Rule" id="MF_01629"/>
    </source>
</evidence>
<dbReference type="EC" id="1.4.3.5" evidence="1"/>
<dbReference type="EMBL" id="CU928161">
    <property type="protein sequence ID" value="CAR02999.1"/>
    <property type="molecule type" value="Genomic_DNA"/>
</dbReference>
<dbReference type="RefSeq" id="WP_001282316.1">
    <property type="nucleotide sequence ID" value="NC_011742.1"/>
</dbReference>
<dbReference type="SMR" id="B7M9Z2"/>
<dbReference type="KEGG" id="ecz:ECS88_1686"/>
<dbReference type="HOGENOM" id="CLU_032263_2_2_6"/>
<dbReference type="UniPathway" id="UPA01068">
    <property type="reaction ID" value="UER00304"/>
</dbReference>
<dbReference type="UniPathway" id="UPA01068">
    <property type="reaction ID" value="UER00305"/>
</dbReference>
<dbReference type="Proteomes" id="UP000000747">
    <property type="component" value="Chromosome"/>
</dbReference>
<dbReference type="GO" id="GO:0010181">
    <property type="term" value="F:FMN binding"/>
    <property type="evidence" value="ECO:0007669"/>
    <property type="project" value="UniProtKB-UniRule"/>
</dbReference>
<dbReference type="GO" id="GO:0004733">
    <property type="term" value="F:pyridoxamine phosphate oxidase activity"/>
    <property type="evidence" value="ECO:0007669"/>
    <property type="project" value="UniProtKB-UniRule"/>
</dbReference>
<dbReference type="GO" id="GO:0008615">
    <property type="term" value="P:pyridoxine biosynthetic process"/>
    <property type="evidence" value="ECO:0007669"/>
    <property type="project" value="UniProtKB-KW"/>
</dbReference>
<dbReference type="FunFam" id="2.30.110.10:FF:000001">
    <property type="entry name" value="Pyridoxine/pyridoxamine 5'-phosphate oxidase"/>
    <property type="match status" value="1"/>
</dbReference>
<dbReference type="Gene3D" id="2.30.110.10">
    <property type="entry name" value="Electron Transport, Fmn-binding Protein, Chain A"/>
    <property type="match status" value="1"/>
</dbReference>
<dbReference type="HAMAP" id="MF_01629">
    <property type="entry name" value="PdxH"/>
    <property type="match status" value="1"/>
</dbReference>
<dbReference type="InterPro" id="IPR000659">
    <property type="entry name" value="Pyridox_Oxase"/>
</dbReference>
<dbReference type="InterPro" id="IPR019740">
    <property type="entry name" value="Pyridox_Oxase_CS"/>
</dbReference>
<dbReference type="InterPro" id="IPR011576">
    <property type="entry name" value="Pyridox_Oxase_N"/>
</dbReference>
<dbReference type="InterPro" id="IPR019576">
    <property type="entry name" value="Pyridoxamine_oxidase_dimer_C"/>
</dbReference>
<dbReference type="InterPro" id="IPR012349">
    <property type="entry name" value="Split_barrel_FMN-bd"/>
</dbReference>
<dbReference type="NCBIfam" id="TIGR00558">
    <property type="entry name" value="pdxH"/>
    <property type="match status" value="1"/>
</dbReference>
<dbReference type="NCBIfam" id="NF004231">
    <property type="entry name" value="PRK05679.1"/>
    <property type="match status" value="1"/>
</dbReference>
<dbReference type="PANTHER" id="PTHR10851:SF0">
    <property type="entry name" value="PYRIDOXINE-5'-PHOSPHATE OXIDASE"/>
    <property type="match status" value="1"/>
</dbReference>
<dbReference type="PANTHER" id="PTHR10851">
    <property type="entry name" value="PYRIDOXINE-5-PHOSPHATE OXIDASE"/>
    <property type="match status" value="1"/>
</dbReference>
<dbReference type="Pfam" id="PF10590">
    <property type="entry name" value="PNP_phzG_C"/>
    <property type="match status" value="1"/>
</dbReference>
<dbReference type="Pfam" id="PF01243">
    <property type="entry name" value="PNPOx_N"/>
    <property type="match status" value="1"/>
</dbReference>
<dbReference type="PIRSF" id="PIRSF000190">
    <property type="entry name" value="Pyd_amn-ph_oxd"/>
    <property type="match status" value="1"/>
</dbReference>
<dbReference type="SUPFAM" id="SSF50475">
    <property type="entry name" value="FMN-binding split barrel"/>
    <property type="match status" value="1"/>
</dbReference>
<dbReference type="PROSITE" id="PS01064">
    <property type="entry name" value="PYRIDOX_OXIDASE"/>
    <property type="match status" value="1"/>
</dbReference>
<sequence length="218" mass="25603">MSDNDELQQIAHLRREYTKGGLRRRDLPADPLTLFERWLSQACEAKLADPTAMVVATVDEHDQPYQRIVLLKHYDEKGMVFYTNLGSRKAHQIENNPRVSLLFPWHTLERQVMVIGKAERLSTLEVMKYFHSRPRDSQIGAWVSKQSSRISARGILESKFLELKQKFQQGEVPLPSFWGGFRVSLEQIEFWQGGEHRLHDRFLYQRENDAWKIDRLAP</sequence>
<name>PDXH_ECO45</name>
<accession>B7M9Z2</accession>
<reference key="1">
    <citation type="journal article" date="2009" name="PLoS Genet.">
        <title>Organised genome dynamics in the Escherichia coli species results in highly diverse adaptive paths.</title>
        <authorList>
            <person name="Touchon M."/>
            <person name="Hoede C."/>
            <person name="Tenaillon O."/>
            <person name="Barbe V."/>
            <person name="Baeriswyl S."/>
            <person name="Bidet P."/>
            <person name="Bingen E."/>
            <person name="Bonacorsi S."/>
            <person name="Bouchier C."/>
            <person name="Bouvet O."/>
            <person name="Calteau A."/>
            <person name="Chiapello H."/>
            <person name="Clermont O."/>
            <person name="Cruveiller S."/>
            <person name="Danchin A."/>
            <person name="Diard M."/>
            <person name="Dossat C."/>
            <person name="Karoui M.E."/>
            <person name="Frapy E."/>
            <person name="Garry L."/>
            <person name="Ghigo J.M."/>
            <person name="Gilles A.M."/>
            <person name="Johnson J."/>
            <person name="Le Bouguenec C."/>
            <person name="Lescat M."/>
            <person name="Mangenot S."/>
            <person name="Martinez-Jehanne V."/>
            <person name="Matic I."/>
            <person name="Nassif X."/>
            <person name="Oztas S."/>
            <person name="Petit M.A."/>
            <person name="Pichon C."/>
            <person name="Rouy Z."/>
            <person name="Ruf C.S."/>
            <person name="Schneider D."/>
            <person name="Tourret J."/>
            <person name="Vacherie B."/>
            <person name="Vallenet D."/>
            <person name="Medigue C."/>
            <person name="Rocha E.P.C."/>
            <person name="Denamur E."/>
        </authorList>
    </citation>
    <scope>NUCLEOTIDE SEQUENCE [LARGE SCALE GENOMIC DNA]</scope>
    <source>
        <strain>S88 / ExPEC</strain>
    </source>
</reference>
<keyword id="KW-0285">Flavoprotein</keyword>
<keyword id="KW-0288">FMN</keyword>
<keyword id="KW-0560">Oxidoreductase</keyword>
<keyword id="KW-0664">Pyridoxine biosynthesis</keyword>
<keyword id="KW-1185">Reference proteome</keyword>
<proteinExistence type="inferred from homology"/>
<comment type="function">
    <text evidence="1">Catalyzes the oxidation of either pyridoxine 5'-phosphate (PNP) or pyridoxamine 5'-phosphate (PMP) into pyridoxal 5'-phosphate (PLP).</text>
</comment>
<comment type="catalytic activity">
    <reaction evidence="1">
        <text>pyridoxamine 5'-phosphate + O2 + H2O = pyridoxal 5'-phosphate + H2O2 + NH4(+)</text>
        <dbReference type="Rhea" id="RHEA:15817"/>
        <dbReference type="ChEBI" id="CHEBI:15377"/>
        <dbReference type="ChEBI" id="CHEBI:15379"/>
        <dbReference type="ChEBI" id="CHEBI:16240"/>
        <dbReference type="ChEBI" id="CHEBI:28938"/>
        <dbReference type="ChEBI" id="CHEBI:58451"/>
        <dbReference type="ChEBI" id="CHEBI:597326"/>
        <dbReference type="EC" id="1.4.3.5"/>
    </reaction>
</comment>
<comment type="catalytic activity">
    <reaction evidence="1">
        <text>pyridoxine 5'-phosphate + O2 = pyridoxal 5'-phosphate + H2O2</text>
        <dbReference type="Rhea" id="RHEA:15149"/>
        <dbReference type="ChEBI" id="CHEBI:15379"/>
        <dbReference type="ChEBI" id="CHEBI:16240"/>
        <dbReference type="ChEBI" id="CHEBI:58589"/>
        <dbReference type="ChEBI" id="CHEBI:597326"/>
        <dbReference type="EC" id="1.4.3.5"/>
    </reaction>
</comment>
<comment type="cofactor">
    <cofactor evidence="1">
        <name>FMN</name>
        <dbReference type="ChEBI" id="CHEBI:58210"/>
    </cofactor>
    <text evidence="1">Binds 1 FMN per subunit.</text>
</comment>
<comment type="pathway">
    <text evidence="1">Cofactor metabolism; pyridoxal 5'-phosphate salvage; pyridoxal 5'-phosphate from pyridoxamine 5'-phosphate: step 1/1.</text>
</comment>
<comment type="pathway">
    <text evidence="1">Cofactor metabolism; pyridoxal 5'-phosphate salvage; pyridoxal 5'-phosphate from pyridoxine 5'-phosphate: step 1/1.</text>
</comment>
<comment type="subunit">
    <text evidence="1">Homodimer.</text>
</comment>
<comment type="similarity">
    <text evidence="1">Belongs to the pyridoxamine 5'-phosphate oxidase family.</text>
</comment>
<feature type="chain" id="PRO_1000186305" description="Pyridoxine/pyridoxamine 5'-phosphate oxidase">
    <location>
        <begin position="1"/>
        <end position="218"/>
    </location>
</feature>
<feature type="binding site" evidence="1">
    <location>
        <begin position="14"/>
        <end position="17"/>
    </location>
    <ligand>
        <name>substrate</name>
    </ligand>
</feature>
<feature type="binding site" evidence="1">
    <location>
        <begin position="67"/>
        <end position="72"/>
    </location>
    <ligand>
        <name>FMN</name>
        <dbReference type="ChEBI" id="CHEBI:58210"/>
    </ligand>
</feature>
<feature type="binding site" evidence="1">
    <location>
        <position position="72"/>
    </location>
    <ligand>
        <name>substrate</name>
    </ligand>
</feature>
<feature type="binding site" evidence="1">
    <location>
        <begin position="82"/>
        <end position="83"/>
    </location>
    <ligand>
        <name>FMN</name>
        <dbReference type="ChEBI" id="CHEBI:58210"/>
    </ligand>
</feature>
<feature type="binding site" evidence="1">
    <location>
        <position position="88"/>
    </location>
    <ligand>
        <name>FMN</name>
        <dbReference type="ChEBI" id="CHEBI:58210"/>
    </ligand>
</feature>
<feature type="binding site" evidence="1">
    <location>
        <position position="89"/>
    </location>
    <ligand>
        <name>FMN</name>
        <dbReference type="ChEBI" id="CHEBI:58210"/>
    </ligand>
</feature>
<feature type="binding site" evidence="1">
    <location>
        <position position="111"/>
    </location>
    <ligand>
        <name>FMN</name>
        <dbReference type="ChEBI" id="CHEBI:58210"/>
    </ligand>
</feature>
<feature type="binding site" evidence="1">
    <location>
        <position position="129"/>
    </location>
    <ligand>
        <name>substrate</name>
    </ligand>
</feature>
<feature type="binding site" evidence="1">
    <location>
        <position position="133"/>
    </location>
    <ligand>
        <name>substrate</name>
    </ligand>
</feature>
<feature type="binding site" evidence="1">
    <location>
        <position position="137"/>
    </location>
    <ligand>
        <name>substrate</name>
    </ligand>
</feature>
<feature type="binding site" evidence="1">
    <location>
        <begin position="146"/>
        <end position="147"/>
    </location>
    <ligand>
        <name>FMN</name>
        <dbReference type="ChEBI" id="CHEBI:58210"/>
    </ligand>
</feature>
<feature type="binding site" evidence="1">
    <location>
        <position position="191"/>
    </location>
    <ligand>
        <name>FMN</name>
        <dbReference type="ChEBI" id="CHEBI:58210"/>
    </ligand>
</feature>
<feature type="binding site" evidence="1">
    <location>
        <begin position="197"/>
        <end position="199"/>
    </location>
    <ligand>
        <name>substrate</name>
    </ligand>
</feature>
<feature type="binding site" evidence="1">
    <location>
        <position position="201"/>
    </location>
    <ligand>
        <name>FMN</name>
        <dbReference type="ChEBI" id="CHEBI:58210"/>
    </ligand>
</feature>
<gene>
    <name evidence="1" type="primary">pdxH</name>
    <name type="ordered locus">ECS88_1686</name>
</gene>
<protein>
    <recommendedName>
        <fullName evidence="1">Pyridoxine/pyridoxamine 5'-phosphate oxidase</fullName>
        <ecNumber evidence="1">1.4.3.5</ecNumber>
    </recommendedName>
    <alternativeName>
        <fullName evidence="1">PNP/PMP oxidase</fullName>
        <shortName evidence="1">PNPOx</shortName>
    </alternativeName>
    <alternativeName>
        <fullName evidence="1">Pyridoxal 5'-phosphate synthase</fullName>
    </alternativeName>
</protein>